<sequence length="72" mass="8194">MSKQTAIEQDGVILEALSNAMFKVELQNGHVITAHISGKMRMHYIKILPGDKVKVEMSPYDLTKGRISFRYK</sequence>
<dbReference type="EMBL" id="AE015924">
    <property type="protein sequence ID" value="AAQ66897.1"/>
    <property type="molecule type" value="Genomic_DNA"/>
</dbReference>
<dbReference type="RefSeq" id="WP_004583577.1">
    <property type="nucleotide sequence ID" value="NC_002950.2"/>
</dbReference>
<dbReference type="SMR" id="Q7MTN5"/>
<dbReference type="STRING" id="242619.PG_1916"/>
<dbReference type="EnsemblBacteria" id="AAQ66897">
    <property type="protein sequence ID" value="AAQ66897"/>
    <property type="gene ID" value="PG_1916"/>
</dbReference>
<dbReference type="GeneID" id="94550695"/>
<dbReference type="KEGG" id="pgi:PG_1916"/>
<dbReference type="eggNOG" id="COG0361">
    <property type="taxonomic scope" value="Bacteria"/>
</dbReference>
<dbReference type="HOGENOM" id="CLU_151267_1_0_10"/>
<dbReference type="Proteomes" id="UP000000588">
    <property type="component" value="Chromosome"/>
</dbReference>
<dbReference type="GO" id="GO:0005829">
    <property type="term" value="C:cytosol"/>
    <property type="evidence" value="ECO:0007669"/>
    <property type="project" value="TreeGrafter"/>
</dbReference>
<dbReference type="GO" id="GO:0043022">
    <property type="term" value="F:ribosome binding"/>
    <property type="evidence" value="ECO:0007669"/>
    <property type="project" value="UniProtKB-UniRule"/>
</dbReference>
<dbReference type="GO" id="GO:0019843">
    <property type="term" value="F:rRNA binding"/>
    <property type="evidence" value="ECO:0007669"/>
    <property type="project" value="UniProtKB-UniRule"/>
</dbReference>
<dbReference type="GO" id="GO:0003743">
    <property type="term" value="F:translation initiation factor activity"/>
    <property type="evidence" value="ECO:0007669"/>
    <property type="project" value="UniProtKB-UniRule"/>
</dbReference>
<dbReference type="CDD" id="cd04451">
    <property type="entry name" value="S1_IF1"/>
    <property type="match status" value="1"/>
</dbReference>
<dbReference type="FunFam" id="2.40.50.140:FF:000002">
    <property type="entry name" value="Translation initiation factor IF-1"/>
    <property type="match status" value="1"/>
</dbReference>
<dbReference type="Gene3D" id="2.40.50.140">
    <property type="entry name" value="Nucleic acid-binding proteins"/>
    <property type="match status" value="1"/>
</dbReference>
<dbReference type="HAMAP" id="MF_00075">
    <property type="entry name" value="IF_1"/>
    <property type="match status" value="1"/>
</dbReference>
<dbReference type="InterPro" id="IPR012340">
    <property type="entry name" value="NA-bd_OB-fold"/>
</dbReference>
<dbReference type="InterPro" id="IPR006196">
    <property type="entry name" value="RNA-binding_domain_S1_IF1"/>
</dbReference>
<dbReference type="InterPro" id="IPR003029">
    <property type="entry name" value="S1_domain"/>
</dbReference>
<dbReference type="InterPro" id="IPR004368">
    <property type="entry name" value="TIF_IF1"/>
</dbReference>
<dbReference type="NCBIfam" id="TIGR00008">
    <property type="entry name" value="infA"/>
    <property type="match status" value="1"/>
</dbReference>
<dbReference type="PANTHER" id="PTHR33370">
    <property type="entry name" value="TRANSLATION INITIATION FACTOR IF-1, CHLOROPLASTIC"/>
    <property type="match status" value="1"/>
</dbReference>
<dbReference type="PANTHER" id="PTHR33370:SF1">
    <property type="entry name" value="TRANSLATION INITIATION FACTOR IF-1, CHLOROPLASTIC"/>
    <property type="match status" value="1"/>
</dbReference>
<dbReference type="Pfam" id="PF01176">
    <property type="entry name" value="eIF-1a"/>
    <property type="match status" value="1"/>
</dbReference>
<dbReference type="SMART" id="SM00316">
    <property type="entry name" value="S1"/>
    <property type="match status" value="1"/>
</dbReference>
<dbReference type="SUPFAM" id="SSF50249">
    <property type="entry name" value="Nucleic acid-binding proteins"/>
    <property type="match status" value="1"/>
</dbReference>
<dbReference type="PROSITE" id="PS50832">
    <property type="entry name" value="S1_IF1_TYPE"/>
    <property type="match status" value="1"/>
</dbReference>
<keyword id="KW-0963">Cytoplasm</keyword>
<keyword id="KW-0396">Initiation factor</keyword>
<keyword id="KW-0648">Protein biosynthesis</keyword>
<keyword id="KW-1185">Reference proteome</keyword>
<keyword id="KW-0694">RNA-binding</keyword>
<keyword id="KW-0699">rRNA-binding</keyword>
<proteinExistence type="inferred from homology"/>
<organism>
    <name type="scientific">Porphyromonas gingivalis (strain ATCC BAA-308 / W83)</name>
    <dbReference type="NCBI Taxonomy" id="242619"/>
    <lineage>
        <taxon>Bacteria</taxon>
        <taxon>Pseudomonadati</taxon>
        <taxon>Bacteroidota</taxon>
        <taxon>Bacteroidia</taxon>
        <taxon>Bacteroidales</taxon>
        <taxon>Porphyromonadaceae</taxon>
        <taxon>Porphyromonas</taxon>
    </lineage>
</organism>
<gene>
    <name evidence="1" type="primary">infA</name>
    <name type="ordered locus">PG_1916</name>
</gene>
<accession>Q7MTN5</accession>
<protein>
    <recommendedName>
        <fullName evidence="1">Translation initiation factor IF-1</fullName>
    </recommendedName>
</protein>
<evidence type="ECO:0000255" key="1">
    <source>
        <dbReference type="HAMAP-Rule" id="MF_00075"/>
    </source>
</evidence>
<reference key="1">
    <citation type="journal article" date="2003" name="J. Bacteriol.">
        <title>Complete genome sequence of the oral pathogenic bacterium Porphyromonas gingivalis strain W83.</title>
        <authorList>
            <person name="Nelson K.E."/>
            <person name="Fleischmann R.D."/>
            <person name="DeBoy R.T."/>
            <person name="Paulsen I.T."/>
            <person name="Fouts D.E."/>
            <person name="Eisen J.A."/>
            <person name="Daugherty S.C."/>
            <person name="Dodson R.J."/>
            <person name="Durkin A.S."/>
            <person name="Gwinn M.L."/>
            <person name="Haft D.H."/>
            <person name="Kolonay J.F."/>
            <person name="Nelson W.C."/>
            <person name="Mason T.M."/>
            <person name="Tallon L."/>
            <person name="Gray J."/>
            <person name="Granger D."/>
            <person name="Tettelin H."/>
            <person name="Dong H."/>
            <person name="Galvin J.L."/>
            <person name="Duncan M.J."/>
            <person name="Dewhirst F.E."/>
            <person name="Fraser C.M."/>
        </authorList>
    </citation>
    <scope>NUCLEOTIDE SEQUENCE [LARGE SCALE GENOMIC DNA]</scope>
    <source>
        <strain>ATCC BAA-308 / W83</strain>
    </source>
</reference>
<name>IF1_PORGI</name>
<comment type="function">
    <text evidence="1">One of the essential components for the initiation of protein synthesis. Stabilizes the binding of IF-2 and IF-3 on the 30S subunit to which N-formylmethionyl-tRNA(fMet) subsequently binds. Helps modulate mRNA selection, yielding the 30S pre-initiation complex (PIC). Upon addition of the 50S ribosomal subunit IF-1, IF-2 and IF-3 are released leaving the mature 70S translation initiation complex.</text>
</comment>
<comment type="subunit">
    <text evidence="1">Component of the 30S ribosomal translation pre-initiation complex which assembles on the 30S ribosome in the order IF-2 and IF-3, IF-1 and N-formylmethionyl-tRNA(fMet); mRNA recruitment can occur at any time during PIC assembly.</text>
</comment>
<comment type="subcellular location">
    <subcellularLocation>
        <location evidence="1">Cytoplasm</location>
    </subcellularLocation>
</comment>
<comment type="similarity">
    <text evidence="1">Belongs to the IF-1 family.</text>
</comment>
<feature type="chain" id="PRO_0000095842" description="Translation initiation factor IF-1">
    <location>
        <begin position="1"/>
        <end position="72"/>
    </location>
</feature>
<feature type="domain" description="S1-like" evidence="1">
    <location>
        <begin position="1"/>
        <end position="72"/>
    </location>
</feature>